<proteinExistence type="inferred from homology"/>
<accession>Q2RGX2</accession>
<gene>
    <name evidence="1" type="primary">xylG</name>
    <name type="ordered locus">Moth_2021</name>
</gene>
<feature type="chain" id="PRO_0000271507" description="Xylose import ATP-binding protein XylG">
    <location>
        <begin position="1"/>
        <end position="504"/>
    </location>
</feature>
<feature type="domain" description="ABC transporter 1" evidence="1">
    <location>
        <begin position="6"/>
        <end position="243"/>
    </location>
</feature>
<feature type="domain" description="ABC transporter 2" evidence="1">
    <location>
        <begin position="262"/>
        <end position="504"/>
    </location>
</feature>
<feature type="binding site" evidence="1">
    <location>
        <begin position="38"/>
        <end position="45"/>
    </location>
    <ligand>
        <name>ATP</name>
        <dbReference type="ChEBI" id="CHEBI:30616"/>
    </ligand>
</feature>
<name>XYLG_MOOTA</name>
<dbReference type="EC" id="7.5.2.10" evidence="1"/>
<dbReference type="EMBL" id="CP000232">
    <property type="protein sequence ID" value="ABC20317.1"/>
    <property type="molecule type" value="Genomic_DNA"/>
</dbReference>
<dbReference type="RefSeq" id="YP_430860.1">
    <property type="nucleotide sequence ID" value="NC_007644.1"/>
</dbReference>
<dbReference type="SMR" id="Q2RGX2"/>
<dbReference type="STRING" id="264732.Moth_2021"/>
<dbReference type="EnsemblBacteria" id="ABC20317">
    <property type="protein sequence ID" value="ABC20317"/>
    <property type="gene ID" value="Moth_2021"/>
</dbReference>
<dbReference type="KEGG" id="mta:Moth_2021"/>
<dbReference type="PATRIC" id="fig|264732.11.peg.2194"/>
<dbReference type="eggNOG" id="COG1129">
    <property type="taxonomic scope" value="Bacteria"/>
</dbReference>
<dbReference type="HOGENOM" id="CLU_000604_92_3_9"/>
<dbReference type="OrthoDB" id="9771863at2"/>
<dbReference type="GO" id="GO:0005886">
    <property type="term" value="C:plasma membrane"/>
    <property type="evidence" value="ECO:0007669"/>
    <property type="project" value="UniProtKB-SubCell"/>
</dbReference>
<dbReference type="GO" id="GO:0015614">
    <property type="term" value="F:ABC-type D-xylose transporter activity"/>
    <property type="evidence" value="ECO:0007669"/>
    <property type="project" value="UniProtKB-EC"/>
</dbReference>
<dbReference type="GO" id="GO:0005524">
    <property type="term" value="F:ATP binding"/>
    <property type="evidence" value="ECO:0007669"/>
    <property type="project" value="UniProtKB-KW"/>
</dbReference>
<dbReference type="GO" id="GO:0016887">
    <property type="term" value="F:ATP hydrolysis activity"/>
    <property type="evidence" value="ECO:0007669"/>
    <property type="project" value="InterPro"/>
</dbReference>
<dbReference type="CDD" id="cd03216">
    <property type="entry name" value="ABC_Carb_Monos_I"/>
    <property type="match status" value="1"/>
</dbReference>
<dbReference type="CDD" id="cd03215">
    <property type="entry name" value="ABC_Carb_Monos_II"/>
    <property type="match status" value="1"/>
</dbReference>
<dbReference type="FunFam" id="3.40.50.300:FF:000126">
    <property type="entry name" value="Galactose/methyl galactoside import ATP-binding protein MglA"/>
    <property type="match status" value="1"/>
</dbReference>
<dbReference type="FunFam" id="3.40.50.300:FF:000127">
    <property type="entry name" value="Ribose import ATP-binding protein RbsA"/>
    <property type="match status" value="1"/>
</dbReference>
<dbReference type="Gene3D" id="3.40.50.300">
    <property type="entry name" value="P-loop containing nucleotide triphosphate hydrolases"/>
    <property type="match status" value="2"/>
</dbReference>
<dbReference type="InterPro" id="IPR003593">
    <property type="entry name" value="AAA+_ATPase"/>
</dbReference>
<dbReference type="InterPro" id="IPR050107">
    <property type="entry name" value="ABC_carbohydrate_import_ATPase"/>
</dbReference>
<dbReference type="InterPro" id="IPR003439">
    <property type="entry name" value="ABC_transporter-like_ATP-bd"/>
</dbReference>
<dbReference type="InterPro" id="IPR017871">
    <property type="entry name" value="ABC_transporter-like_CS"/>
</dbReference>
<dbReference type="InterPro" id="IPR027417">
    <property type="entry name" value="P-loop_NTPase"/>
</dbReference>
<dbReference type="NCBIfam" id="NF010069">
    <property type="entry name" value="PRK13549.1"/>
    <property type="match status" value="1"/>
</dbReference>
<dbReference type="PANTHER" id="PTHR43790">
    <property type="entry name" value="CARBOHYDRATE TRANSPORT ATP-BINDING PROTEIN MG119-RELATED"/>
    <property type="match status" value="1"/>
</dbReference>
<dbReference type="PANTHER" id="PTHR43790:SF1">
    <property type="entry name" value="XYLOSE IMPORT ATP-BINDING PROTEIN XYLG"/>
    <property type="match status" value="1"/>
</dbReference>
<dbReference type="Pfam" id="PF00005">
    <property type="entry name" value="ABC_tran"/>
    <property type="match status" value="2"/>
</dbReference>
<dbReference type="SMART" id="SM00382">
    <property type="entry name" value="AAA"/>
    <property type="match status" value="2"/>
</dbReference>
<dbReference type="SUPFAM" id="SSF52540">
    <property type="entry name" value="P-loop containing nucleoside triphosphate hydrolases"/>
    <property type="match status" value="2"/>
</dbReference>
<dbReference type="PROSITE" id="PS00211">
    <property type="entry name" value="ABC_TRANSPORTER_1"/>
    <property type="match status" value="1"/>
</dbReference>
<dbReference type="PROSITE" id="PS50893">
    <property type="entry name" value="ABC_TRANSPORTER_2"/>
    <property type="match status" value="2"/>
</dbReference>
<dbReference type="PROSITE" id="PS51280">
    <property type="entry name" value="XYLG"/>
    <property type="match status" value="1"/>
</dbReference>
<reference key="1">
    <citation type="journal article" date="2008" name="Environ. Microbiol.">
        <title>The complete genome sequence of Moorella thermoacetica (f. Clostridium thermoaceticum).</title>
        <authorList>
            <person name="Pierce E."/>
            <person name="Xie G."/>
            <person name="Barabote R.D."/>
            <person name="Saunders E."/>
            <person name="Han C.S."/>
            <person name="Detter J.C."/>
            <person name="Richardson P."/>
            <person name="Brettin T.S."/>
            <person name="Das A."/>
            <person name="Ljungdahl L.G."/>
            <person name="Ragsdale S.W."/>
        </authorList>
    </citation>
    <scope>NUCLEOTIDE SEQUENCE [LARGE SCALE GENOMIC DNA]</scope>
    <source>
        <strain>ATCC 39073 / JCM 9320</strain>
    </source>
</reference>
<keyword id="KW-0067">ATP-binding</keyword>
<keyword id="KW-1003">Cell membrane</keyword>
<keyword id="KW-0472">Membrane</keyword>
<keyword id="KW-0547">Nucleotide-binding</keyword>
<keyword id="KW-0677">Repeat</keyword>
<keyword id="KW-0762">Sugar transport</keyword>
<keyword id="KW-1278">Translocase</keyword>
<keyword id="KW-0813">Transport</keyword>
<comment type="function">
    <text evidence="1">Part of the ABC transporter complex XylFGH involved in xylose import. Responsible for energy coupling to the transport system.</text>
</comment>
<comment type="catalytic activity">
    <reaction evidence="1">
        <text>D-xylose(out) + ATP + H2O = D-xylose(in) + ADP + phosphate + H(+)</text>
        <dbReference type="Rhea" id="RHEA:29899"/>
        <dbReference type="ChEBI" id="CHEBI:15377"/>
        <dbReference type="ChEBI" id="CHEBI:15378"/>
        <dbReference type="ChEBI" id="CHEBI:30616"/>
        <dbReference type="ChEBI" id="CHEBI:43474"/>
        <dbReference type="ChEBI" id="CHEBI:53455"/>
        <dbReference type="ChEBI" id="CHEBI:456216"/>
        <dbReference type="EC" id="7.5.2.10"/>
    </reaction>
</comment>
<comment type="subunit">
    <text evidence="1">The complex is composed of two ATP-binding proteins (XylG), two transmembrane proteins (XylH) and a solute-binding protein (XylF).</text>
</comment>
<comment type="subcellular location">
    <subcellularLocation>
        <location evidence="1">Cell membrane</location>
        <topology evidence="1">Peripheral membrane protein</topology>
    </subcellularLocation>
</comment>
<comment type="similarity">
    <text evidence="1">Belongs to the ABC transporter superfamily. Xylose importer (TC 3.A.1.2.4) family.</text>
</comment>
<organism>
    <name type="scientific">Moorella thermoacetica (strain ATCC 39073 / JCM 9320)</name>
    <dbReference type="NCBI Taxonomy" id="264732"/>
    <lineage>
        <taxon>Bacteria</taxon>
        <taxon>Bacillati</taxon>
        <taxon>Bacillota</taxon>
        <taxon>Clostridia</taxon>
        <taxon>Moorellales</taxon>
        <taxon>Moorellaceae</taxon>
        <taxon>Moorella</taxon>
    </lineage>
</organism>
<protein>
    <recommendedName>
        <fullName evidence="1">Xylose import ATP-binding protein XylG</fullName>
        <ecNumber evidence="1">7.5.2.10</ecNumber>
    </recommendedName>
</protein>
<evidence type="ECO:0000255" key="1">
    <source>
        <dbReference type="HAMAP-Rule" id="MF_01722"/>
    </source>
</evidence>
<sequence>MDHYILEMQEITKQFPGVKALDKVDFKARKGEIHALCGENGAGKSTLMKVLSGVYPYGTYQGEILINGQPQKFYTIKDSERAGIAIIYQELALVSELSVAENIFLGNEPLHHHLIDWDKMYIEATKWLKEVGLDVSPGTKIKNLGVGQQQLVEIAKALAKNASILVLDEPTAALTEAEVEILMHILHQLKSKGVTCIYISHKLNEVFAIADNITVLRDGRTIGTVKKDETSQDKIITMMVGRELNRLFPYINHSPGAITLEVRNFSVYNPDNPRKKIVKDVNFYVRKGEVLGIAGLIGSGRTELVTSIYGGYPGKNEGEIWLDGRKIKIKNSEDALSNGIALVPEDRRRQGLVLDMDICKNITLASLKRSYNIMLNESAEIRDAEFFVDKLKIKSPSVEARVGNLSGGNQQKVVLGKALMTNPRVLILDEPTRGIDVGAKYEIYNLINSLVSQGVAIVMVSSELPEILGMSDRILVLCEGRITGEFSREEATEEKIMACATGGK</sequence>